<feature type="chain" id="PRO_0000234354" description="E3 ubiquitin-protein ligase RBBP6">
    <location>
        <begin position="1"/>
        <end position="1792"/>
    </location>
</feature>
<feature type="domain" description="DWNN" evidence="5">
    <location>
        <begin position="4"/>
        <end position="76"/>
    </location>
</feature>
<feature type="zinc finger region" description="CCHC-type" evidence="3">
    <location>
        <begin position="159"/>
        <end position="176"/>
    </location>
</feature>
<feature type="zinc finger region" description="RING-type; degenerate" evidence="4">
    <location>
        <begin position="259"/>
        <end position="300"/>
    </location>
</feature>
<feature type="region of interest" description="Disordered" evidence="6">
    <location>
        <begin position="326"/>
        <end position="347"/>
    </location>
</feature>
<feature type="region of interest" description="Disordered" evidence="6">
    <location>
        <begin position="371"/>
        <end position="410"/>
    </location>
</feature>
<feature type="region of interest" description="Disordered" evidence="6">
    <location>
        <begin position="532"/>
        <end position="601"/>
    </location>
</feature>
<feature type="region of interest" description="(Microbial infection) Interaction with Ebolavirus VP30" evidence="13">
    <location>
        <begin position="549"/>
        <end position="571"/>
    </location>
</feature>
<feature type="region of interest" description="Disordered" evidence="6">
    <location>
        <begin position="621"/>
        <end position="640"/>
    </location>
</feature>
<feature type="region of interest" description="Disordered" evidence="6">
    <location>
        <begin position="645"/>
        <end position="799"/>
    </location>
</feature>
<feature type="region of interest" description="Disordered" evidence="6">
    <location>
        <begin position="847"/>
        <end position="1290"/>
    </location>
</feature>
<feature type="region of interest" description="Interaction with RB1" evidence="1">
    <location>
        <begin position="982"/>
        <end position="1139"/>
    </location>
</feature>
<feature type="region of interest" description="Disordered" evidence="6">
    <location>
        <begin position="1321"/>
        <end position="1348"/>
    </location>
</feature>
<feature type="region of interest" description="Disordered" evidence="6">
    <location>
        <begin position="1360"/>
        <end position="1665"/>
    </location>
</feature>
<feature type="region of interest" description="Interaction with p53" evidence="1">
    <location>
        <begin position="1433"/>
        <end position="1544"/>
    </location>
</feature>
<feature type="region of interest" description="Disordered" evidence="6">
    <location>
        <begin position="1682"/>
        <end position="1792"/>
    </location>
</feature>
<feature type="short sequence motif" description="PPxPxY" evidence="13">
    <location>
        <begin position="560"/>
        <end position="565"/>
    </location>
</feature>
<feature type="compositionally biased region" description="Pro residues" evidence="6">
    <location>
        <begin position="336"/>
        <end position="347"/>
    </location>
</feature>
<feature type="compositionally biased region" description="Low complexity" evidence="6">
    <location>
        <begin position="374"/>
        <end position="393"/>
    </location>
</feature>
<feature type="compositionally biased region" description="Pro residues" evidence="6">
    <location>
        <begin position="557"/>
        <end position="601"/>
    </location>
</feature>
<feature type="compositionally biased region" description="Polar residues" evidence="6">
    <location>
        <begin position="621"/>
        <end position="634"/>
    </location>
</feature>
<feature type="compositionally biased region" description="Basic and acidic residues" evidence="6">
    <location>
        <begin position="645"/>
        <end position="675"/>
    </location>
</feature>
<feature type="compositionally biased region" description="Low complexity" evidence="6">
    <location>
        <begin position="685"/>
        <end position="719"/>
    </location>
</feature>
<feature type="compositionally biased region" description="Basic residues" evidence="6">
    <location>
        <begin position="735"/>
        <end position="770"/>
    </location>
</feature>
<feature type="compositionally biased region" description="Basic and acidic residues" evidence="6">
    <location>
        <begin position="790"/>
        <end position="799"/>
    </location>
</feature>
<feature type="compositionally biased region" description="Basic and acidic residues" evidence="6">
    <location>
        <begin position="902"/>
        <end position="922"/>
    </location>
</feature>
<feature type="compositionally biased region" description="Basic residues" evidence="6">
    <location>
        <begin position="931"/>
        <end position="940"/>
    </location>
</feature>
<feature type="compositionally biased region" description="Basic and acidic residues" evidence="6">
    <location>
        <begin position="955"/>
        <end position="971"/>
    </location>
</feature>
<feature type="compositionally biased region" description="Basic and acidic residues" evidence="6">
    <location>
        <begin position="979"/>
        <end position="990"/>
    </location>
</feature>
<feature type="compositionally biased region" description="Basic and acidic residues" evidence="6">
    <location>
        <begin position="1001"/>
        <end position="1017"/>
    </location>
</feature>
<feature type="compositionally biased region" description="Basic and acidic residues" evidence="6">
    <location>
        <begin position="1041"/>
        <end position="1071"/>
    </location>
</feature>
<feature type="compositionally biased region" description="Basic and acidic residues" evidence="6">
    <location>
        <begin position="1095"/>
        <end position="1161"/>
    </location>
</feature>
<feature type="compositionally biased region" description="Basic and acidic residues" evidence="6">
    <location>
        <begin position="1182"/>
        <end position="1200"/>
    </location>
</feature>
<feature type="compositionally biased region" description="Basic and acidic residues" evidence="6">
    <location>
        <begin position="1230"/>
        <end position="1248"/>
    </location>
</feature>
<feature type="compositionally biased region" description="Polar residues" evidence="6">
    <location>
        <begin position="1258"/>
        <end position="1276"/>
    </location>
</feature>
<feature type="compositionally biased region" description="Basic and acidic residues" evidence="6">
    <location>
        <begin position="1280"/>
        <end position="1290"/>
    </location>
</feature>
<feature type="compositionally biased region" description="Basic and acidic residues" evidence="6">
    <location>
        <begin position="1362"/>
        <end position="1391"/>
    </location>
</feature>
<feature type="compositionally biased region" description="Basic and acidic residues" evidence="6">
    <location>
        <begin position="1399"/>
        <end position="1435"/>
    </location>
</feature>
<feature type="compositionally biased region" description="Polar residues" evidence="6">
    <location>
        <begin position="1436"/>
        <end position="1447"/>
    </location>
</feature>
<feature type="compositionally biased region" description="Basic and acidic residues" evidence="6">
    <location>
        <begin position="1448"/>
        <end position="1459"/>
    </location>
</feature>
<feature type="compositionally biased region" description="Basic and acidic residues" evidence="6">
    <location>
        <begin position="1468"/>
        <end position="1506"/>
    </location>
</feature>
<feature type="compositionally biased region" description="Basic and acidic residues" evidence="6">
    <location>
        <begin position="1514"/>
        <end position="1580"/>
    </location>
</feature>
<feature type="compositionally biased region" description="Polar residues" evidence="6">
    <location>
        <begin position="1618"/>
        <end position="1627"/>
    </location>
</feature>
<feature type="compositionally biased region" description="Acidic residues" evidence="6">
    <location>
        <begin position="1634"/>
        <end position="1646"/>
    </location>
</feature>
<feature type="compositionally biased region" description="Low complexity" evidence="6">
    <location>
        <begin position="1692"/>
        <end position="1723"/>
    </location>
</feature>
<feature type="compositionally biased region" description="Basic residues" evidence="6">
    <location>
        <begin position="1727"/>
        <end position="1750"/>
    </location>
</feature>
<feature type="compositionally biased region" description="Basic and acidic residues" evidence="6">
    <location>
        <begin position="1751"/>
        <end position="1760"/>
    </location>
</feature>
<feature type="compositionally biased region" description="Basic residues" evidence="6">
    <location>
        <begin position="1761"/>
        <end position="1773"/>
    </location>
</feature>
<feature type="compositionally biased region" description="Basic and acidic residues" evidence="6">
    <location>
        <begin position="1774"/>
        <end position="1792"/>
    </location>
</feature>
<feature type="modified residue" description="N6-acetyllysine" evidence="2">
    <location>
        <position position="130"/>
    </location>
</feature>
<feature type="modified residue" description="Phosphoserine" evidence="21 26">
    <location>
        <position position="244"/>
    </location>
</feature>
<feature type="modified residue" description="Phosphoserine" evidence="21 26">
    <location>
        <position position="245"/>
    </location>
</feature>
<feature type="modified residue" description="Phosphoserine" evidence="21 26">
    <location>
        <position position="246"/>
    </location>
</feature>
<feature type="modified residue" description="Phosphoserine" evidence="21 26">
    <location>
        <position position="247"/>
    </location>
</feature>
<feature type="modified residue" description="Phosphoserine" evidence="21 24 28">
    <location>
        <position position="360"/>
    </location>
</feature>
<feature type="modified residue" description="Phosphoserine" evidence="20 22 24 25 26 28">
    <location>
        <position position="516"/>
    </location>
</feature>
<feature type="modified residue" description="Phosphoserine" evidence="28">
    <location>
        <position position="768"/>
    </location>
</feature>
<feature type="modified residue" description="Phosphoserine" evidence="21 28">
    <location>
        <position position="770"/>
    </location>
</feature>
<feature type="modified residue" description="Phosphoserine" evidence="21 28">
    <location>
        <position position="772"/>
    </location>
</feature>
<feature type="modified residue" description="Phosphoserine" evidence="27">
    <location>
        <position position="780"/>
    </location>
</feature>
<feature type="modified residue" description="Phosphoserine" evidence="28">
    <location>
        <position position="815"/>
    </location>
</feature>
<feature type="modified residue" description="Phosphoserine" evidence="21 26 28">
    <location>
        <position position="861"/>
    </location>
</feature>
<feature type="modified residue" description="Phosphoserine" evidence="28">
    <location>
        <position position="873"/>
    </location>
</feature>
<feature type="modified residue" description="Phosphoserine" evidence="28">
    <location>
        <position position="957"/>
    </location>
</feature>
<feature type="modified residue" description="Phosphothreonine" evidence="28 29">
    <location>
        <position position="984"/>
    </location>
</feature>
<feature type="modified residue" description="Phosphoserine" evidence="21 24 25 26 27 28">
    <location>
        <position position="1179"/>
    </location>
</feature>
<feature type="modified residue" description="Phosphoserine" evidence="28">
    <location>
        <position position="1221"/>
    </location>
</feature>
<feature type="modified residue" description="Phosphothreonine" evidence="2">
    <location>
        <position position="1271"/>
    </location>
</feature>
<feature type="modified residue" description="Phosphoserine" evidence="25 28 29">
    <location>
        <position position="1277"/>
    </location>
</feature>
<feature type="modified residue" description="Phosphoserine" evidence="21 23 25 26 27 28">
    <location>
        <position position="1328"/>
    </location>
</feature>
<feature type="modified residue" description="Phosphoserine" evidence="28">
    <location>
        <position position="1341"/>
    </location>
</feature>
<feature type="modified residue" description="Phosphoserine" evidence="28">
    <location>
        <position position="1347"/>
    </location>
</feature>
<feature type="modified residue" description="Phosphothreonine" evidence="24">
    <location>
        <position position="1468"/>
    </location>
</feature>
<feature type="modified residue" description="Phosphoserine" evidence="24">
    <location>
        <position position="1646"/>
    </location>
</feature>
<feature type="modified residue" description="Phosphoserine" evidence="24 25">
    <location>
        <position position="1648"/>
    </location>
</feature>
<feature type="modified residue" description="Phosphoserine" evidence="2">
    <location>
        <position position="1651"/>
    </location>
</feature>
<feature type="cross-link" description="Glycyl lysine isopeptide (Lys-Gly) (interchain with G-Cter in SUMO2)" evidence="30">
    <location>
        <position position="1106"/>
    </location>
</feature>
<feature type="cross-link" description="Glycyl lysine isopeptide (Lys-Gly) (interchain with G-Cter in SUMO2)" evidence="30 31">
    <location>
        <position position="1169"/>
    </location>
</feature>
<feature type="splice variant" id="VSP_018281" description="In isoform 3." evidence="14">
    <original>IDDSSASISLAQLTKT</original>
    <variation>VCKNTISHFFYTLLLPL</variation>
    <location>
        <begin position="102"/>
        <end position="117"/>
    </location>
</feature>
<feature type="splice variant" id="VSP_018282" description="In isoform 3." evidence="14">
    <location>
        <begin position="118"/>
        <end position="1792"/>
    </location>
</feature>
<feature type="splice variant" id="VSP_018283" description="In isoform 4." evidence="14">
    <location>
        <begin position="431"/>
        <end position="1270"/>
    </location>
</feature>
<feature type="splice variant" id="VSP_018284" description="In isoform 2." evidence="15 16">
    <location>
        <begin position="652"/>
        <end position="685"/>
    </location>
</feature>
<feature type="sequence variant" id="VAR_051306" description="In dbSNP:rs16973796.">
    <original>D</original>
    <variation>H</variation>
    <location>
        <position position="43"/>
    </location>
</feature>
<feature type="sequence variant" id="VAR_026216" description="In dbSNP:rs16973840.">
    <original>V</original>
    <variation>A</variation>
    <location>
        <position position="555"/>
    </location>
</feature>
<feature type="sequence variant" id="VAR_051307" description="In dbSNP:rs3743968.">
    <original>K</original>
    <variation>I</variation>
    <location>
        <position position="1208"/>
    </location>
</feature>
<feature type="sequence conflict" description="In Ref. 5; AAL68925." evidence="17" ref="5">
    <original>I</original>
    <variation>T</variation>
    <location>
        <position position="223"/>
    </location>
</feature>
<feature type="sequence conflict" description="In Ref. 5; AAL68925." evidence="17" ref="5">
    <original>D</original>
    <variation>H</variation>
    <location>
        <position position="1633"/>
    </location>
</feature>
<feature type="strand" evidence="32">
    <location>
        <begin position="1"/>
        <end position="8"/>
    </location>
</feature>
<feature type="strand" evidence="32">
    <location>
        <begin position="12"/>
        <end position="25"/>
    </location>
</feature>
<feature type="helix" evidence="32">
    <location>
        <begin position="26"/>
        <end position="37"/>
    </location>
</feature>
<feature type="turn" evidence="32">
    <location>
        <begin position="41"/>
        <end position="43"/>
    </location>
</feature>
<feature type="strand" evidence="32">
    <location>
        <begin position="44"/>
        <end position="53"/>
    </location>
</feature>
<feature type="strand" evidence="32">
    <location>
        <begin position="63"/>
        <end position="65"/>
    </location>
</feature>
<feature type="strand" evidence="32">
    <location>
        <begin position="70"/>
        <end position="76"/>
    </location>
</feature>
<feature type="turn" evidence="33">
    <location>
        <begin position="162"/>
        <end position="164"/>
    </location>
</feature>
<feature type="helix" evidence="33">
    <location>
        <begin position="171"/>
        <end position="173"/>
    </location>
</feature>
<feature type="helix" evidence="33">
    <location>
        <begin position="176"/>
        <end position="178"/>
    </location>
</feature>
<feature type="strand" evidence="33">
    <location>
        <begin position="197"/>
        <end position="199"/>
    </location>
</feature>
<feature type="helix" evidence="34">
    <location>
        <begin position="255"/>
        <end position="257"/>
    </location>
</feature>
<feature type="strand" evidence="34">
    <location>
        <begin position="260"/>
        <end position="262"/>
    </location>
</feature>
<feature type="strand" evidence="34">
    <location>
        <begin position="273"/>
        <end position="275"/>
    </location>
</feature>
<feature type="helix" evidence="34">
    <location>
        <begin position="283"/>
        <end position="290"/>
    </location>
</feature>
<feature type="strand" evidence="34">
    <location>
        <begin position="291"/>
        <end position="294"/>
    </location>
</feature>
<feature type="strand" evidence="34">
    <location>
        <begin position="297"/>
        <end position="299"/>
    </location>
</feature>
<feature type="turn" evidence="34">
    <location>
        <begin position="306"/>
        <end position="309"/>
    </location>
</feature>
<feature type="helix" evidence="35">
    <location>
        <begin position="313"/>
        <end position="326"/>
    </location>
</feature>
<protein>
    <recommendedName>
        <fullName>E3 ubiquitin-protein ligase RBBP6</fullName>
        <ecNumber>2.3.2.27</ecNumber>
    </recommendedName>
    <alternativeName>
        <fullName>Proliferation potential-related protein</fullName>
    </alternativeName>
    <alternativeName>
        <fullName>Protein P2P-R</fullName>
    </alternativeName>
    <alternativeName>
        <fullName evidence="17">RING-type E3 ubiquitin transferase RBBP6</fullName>
    </alternativeName>
    <alternativeName>
        <fullName>Retinoblastoma-binding Q protein 1</fullName>
        <shortName>RBQ-1</shortName>
    </alternativeName>
    <alternativeName>
        <fullName>Retinoblastoma-binding protein 6</fullName>
    </alternativeName>
    <alternativeName>
        <fullName>p53-associated cellular protein of testis</fullName>
    </alternativeName>
</protein>
<comment type="function">
    <text evidence="2 9 12">E3 ubiquitin-protein ligase which promotes ubiquitination of YBX1, leading to its degradation by the proteasome (PubMed:18851979). May play a role as a scaffold protein to promote the assembly of the p53/TP53-MDM2 complex, resulting in increase of MDM2-mediated ubiquitination and degradation of p53/TP53; may function as negative regulator of p53/TP53, leading to both apoptosis and cell growth (By similarity). Regulates DNA-replication and the stability of chromosomal common fragile sites (CFSs) in a ZBTB38- and MCM10-dependent manner. Controls ZBTB38 protein stability and abundance via ubiquitination and proteasomal degradation, and ZBTB38 in turn negatively regulates the expression of MCM10 which plays an important role in DNA-replication (PubMed:24726359).</text>
</comment>
<comment type="function">
    <text evidence="13">(Microbial infection) [Isoform 1]: Restricts ebolavirus replication probably by impairing the vp30-NP interaction, and thus viral transcription.</text>
</comment>
<comment type="catalytic activity">
    <reaction>
        <text>S-ubiquitinyl-[E2 ubiquitin-conjugating enzyme]-L-cysteine + [acceptor protein]-L-lysine = [E2 ubiquitin-conjugating enzyme]-L-cysteine + N(6)-ubiquitinyl-[acceptor protein]-L-lysine.</text>
        <dbReference type="EC" id="2.3.2.27"/>
    </reaction>
</comment>
<comment type="pathway">
    <text>Protein modification; protein ubiquitination.</text>
</comment>
<comment type="subunit">
    <text evidence="2 8 9 10 12">Interacts with p53/TP53 and RB1 (By similarity). Interacts also with MDM2 and YBX1 (PubMed:17470788, PubMed:18851979). Interacts with NEK6 (PubMed:20873783). Interacts with ZBTB38 (PubMed:24726359).</text>
</comment>
<comment type="subunit">
    <text evidence="13">(Microbial infection) [Isoform 1]: Interacts with ebolavirus VP30.</text>
</comment>
<comment type="interaction">
    <interactant intactId="EBI-2117026">
        <id>Q7Z6E9</id>
    </interactant>
    <interactant intactId="EBI-398885">
        <id>Q16629</id>
        <label>SRSF7</label>
    </interactant>
    <organismsDiffer>false</organismsDiffer>
    <experiments>4</experiments>
</comment>
<comment type="interaction">
    <interactant intactId="EBI-11743772">
        <id>Q7Z6E9-3</id>
    </interactant>
    <interactant intactId="EBI-748312">
        <id>P49821</id>
        <label>NDUFV1</label>
    </interactant>
    <organismsDiffer>false</organismsDiffer>
    <experiments>3</experiments>
</comment>
<comment type="interaction">
    <interactant intactId="EBI-11743772">
        <id>Q7Z6E9-3</id>
    </interactant>
    <interactant intactId="EBI-720609">
        <id>O76024</id>
        <label>WFS1</label>
    </interactant>
    <organismsDiffer>false</organismsDiffer>
    <experiments>3</experiments>
</comment>
<comment type="subcellular location">
    <subcellularLocation>
        <location>Nucleus</location>
        <location>Nucleolus</location>
    </subcellularLocation>
    <subcellularLocation>
        <location>Chromosome</location>
    </subcellularLocation>
    <subcellularLocation>
        <location>Cytoplasm</location>
        <location>Cytoskeleton</location>
        <location>Microtubule organizing center</location>
        <location>Centrosome</location>
    </subcellularLocation>
    <text>Colocalizes with mitotic chromosomes. Colocalizes with NEK6 in the centrosome.</text>
</comment>
<comment type="alternative products">
    <event type="alternative splicing"/>
    <isoform>
        <id>Q7Z6E9-1</id>
        <name>1</name>
        <sequence type="displayed"/>
    </isoform>
    <isoform>
        <id>Q7Z6E9-2</id>
        <name>2</name>
        <sequence type="described" ref="VSP_018284"/>
    </isoform>
    <isoform>
        <id>Q7Z6E9-3</id>
        <name>3</name>
        <sequence type="described" ref="VSP_018281 VSP_018282"/>
    </isoform>
    <isoform>
        <id>Q7Z6E9-4</id>
        <name>4</name>
        <sequence type="described" ref="VSP_018283"/>
    </isoform>
</comment>
<comment type="tissue specificity">
    <text evidence="7">Highly expressed in the placenta and testis. Expressed at lower levels in the brain, heart, kidney, liver and lung. Overexpressed in esophageal cancer.</text>
</comment>
<comment type="domain">
    <text evidence="11">Contains a N-terminus DWNN domain, a zinc-finger domain and a C4C4 zinc-binding RING finger domain (PubMed:22130672). The ring finger may indeed be a U-box domain (PubMed:22130672).</text>
</comment>
<comment type="PTM">
    <text evidence="10">Phosphorylated by NEK6.</text>
</comment>
<comment type="sequence caution" evidence="17">
    <conflict type="miscellaneous discrepancy">
        <sequence resource="EMBL-CDS" id="AAG43155"/>
    </conflict>
    <text>Intron retention.</text>
</comment>
<comment type="sequence caution" evidence="17">
    <conflict type="miscellaneous discrepancy">
        <sequence resource="EMBL-CDS" id="AAH63524"/>
    </conflict>
    <text>Contaminating sequence. Potential poly-A sequence.</text>
</comment>
<comment type="sequence caution" evidence="17">
    <conflict type="frameshift">
        <sequence resource="EMBL-CDS" id="AAL05625"/>
    </conflict>
</comment>
<comment type="sequence caution" evidence="17">
    <conflict type="miscellaneous discrepancy">
        <sequence resource="EMBL-CDS" id="AAL68925"/>
    </conflict>
    <text>Intron retention.</text>
</comment>
<comment type="sequence caution" evidence="17">
    <conflict type="frameshift">
        <sequence resource="EMBL-CDS" id="CAA59445"/>
    </conflict>
</comment>
<name>RBBP6_HUMAN</name>
<gene>
    <name type="primary">RBBP6</name>
    <name type="synonym">P2PR</name>
    <name type="synonym">PACT</name>
    <name type="synonym">RBQ1</name>
    <name type="ORF">My038</name>
</gene>
<evidence type="ECO:0000250" key="1"/>
<evidence type="ECO:0000250" key="2">
    <source>
        <dbReference type="UniProtKB" id="P97868"/>
    </source>
</evidence>
<evidence type="ECO:0000255" key="3">
    <source>
        <dbReference type="PROSITE-ProRule" id="PRU00047"/>
    </source>
</evidence>
<evidence type="ECO:0000255" key="4">
    <source>
        <dbReference type="PROSITE-ProRule" id="PRU00175"/>
    </source>
</evidence>
<evidence type="ECO:0000255" key="5">
    <source>
        <dbReference type="PROSITE-ProRule" id="PRU00612"/>
    </source>
</evidence>
<evidence type="ECO:0000256" key="6">
    <source>
        <dbReference type="SAM" id="MobiDB-lite"/>
    </source>
</evidence>
<evidence type="ECO:0000269" key="7">
    <source>
    </source>
</evidence>
<evidence type="ECO:0000269" key="8">
    <source>
    </source>
</evidence>
<evidence type="ECO:0000269" key="9">
    <source>
    </source>
</evidence>
<evidence type="ECO:0000269" key="10">
    <source>
    </source>
</evidence>
<evidence type="ECO:0000269" key="11">
    <source>
    </source>
</evidence>
<evidence type="ECO:0000269" key="12">
    <source>
    </source>
</evidence>
<evidence type="ECO:0000269" key="13">
    <source>
    </source>
</evidence>
<evidence type="ECO:0000303" key="14">
    <source>
    </source>
</evidence>
<evidence type="ECO:0000303" key="15">
    <source ref="1"/>
</evidence>
<evidence type="ECO:0000303" key="16">
    <source ref="5"/>
</evidence>
<evidence type="ECO:0000305" key="17"/>
<evidence type="ECO:0007744" key="18">
    <source>
        <dbReference type="PDB" id="3ZTG"/>
    </source>
</evidence>
<evidence type="ECO:0007744" key="19">
    <source>
        <dbReference type="PDB" id="6E5X"/>
    </source>
</evidence>
<evidence type="ECO:0007744" key="20">
    <source>
    </source>
</evidence>
<evidence type="ECO:0007744" key="21">
    <source>
    </source>
</evidence>
<evidence type="ECO:0007744" key="22">
    <source>
    </source>
</evidence>
<evidence type="ECO:0007744" key="23">
    <source>
    </source>
</evidence>
<evidence type="ECO:0007744" key="24">
    <source>
    </source>
</evidence>
<evidence type="ECO:0007744" key="25">
    <source>
    </source>
</evidence>
<evidence type="ECO:0007744" key="26">
    <source>
    </source>
</evidence>
<evidence type="ECO:0007744" key="27">
    <source>
    </source>
</evidence>
<evidence type="ECO:0007744" key="28">
    <source>
    </source>
</evidence>
<evidence type="ECO:0007744" key="29">
    <source>
    </source>
</evidence>
<evidence type="ECO:0007744" key="30">
    <source>
    </source>
</evidence>
<evidence type="ECO:0007744" key="31">
    <source>
    </source>
</evidence>
<evidence type="ECO:0007829" key="32">
    <source>
        <dbReference type="PDB" id="2C7H"/>
    </source>
</evidence>
<evidence type="ECO:0007829" key="33">
    <source>
        <dbReference type="PDB" id="2YSA"/>
    </source>
</evidence>
<evidence type="ECO:0007829" key="34">
    <source>
        <dbReference type="PDB" id="2YUR"/>
    </source>
</evidence>
<evidence type="ECO:0007829" key="35">
    <source>
        <dbReference type="PDB" id="3ZTG"/>
    </source>
</evidence>
<accession>Q7Z6E9</accession>
<accession>Q147T5</accession>
<accession>Q15290</accession>
<accession>Q6DKH4</accession>
<accession>Q6P4C2</accession>
<accession>Q6YNC9</accession>
<accession>Q7Z6E8</accession>
<accession>Q8N0V2</accession>
<accession>Q96PH3</accession>
<accession>Q9H3I8</accession>
<accession>Q9H5M5</accession>
<accession>Q9NPX4</accession>
<organism>
    <name type="scientific">Homo sapiens</name>
    <name type="common">Human</name>
    <dbReference type="NCBI Taxonomy" id="9606"/>
    <lineage>
        <taxon>Eukaryota</taxon>
        <taxon>Metazoa</taxon>
        <taxon>Chordata</taxon>
        <taxon>Craniata</taxon>
        <taxon>Vertebrata</taxon>
        <taxon>Euteleostomi</taxon>
        <taxon>Mammalia</taxon>
        <taxon>Eutheria</taxon>
        <taxon>Euarchontoglires</taxon>
        <taxon>Primates</taxon>
        <taxon>Haplorrhini</taxon>
        <taxon>Catarrhini</taxon>
        <taxon>Hominidae</taxon>
        <taxon>Homo</taxon>
    </lineage>
</organism>
<sequence>MSCVHYKFSSKLNYDTVTFDGLHISLCDLKKQIMGREKLKAADCDLQITNAQTKEEYTDDNALIPKNSSVIVRRIPIGGVKSTSKTYVISRTEPAMATTKAIDDSSASISLAQLTKTANLAEANASEEDKIKAMMSQSGHEYDPINYMKKPLGPPPPSYTCFRCGKPGHYIKNCPTNGDKNFESGPRIKKSTGIPRSFMMEVKDPNMKGAMLTNTGKYAIPTIDAEAYAIGKKEKPPFLPEEPSSSSEEDDPIPDELLCLICKDIMTDAVVIPCCGNSYCDECIRTALLESDEHTCPTCHQNDVSPDALIANKFLRQAVNNFKNETGYTKRLRKQLPPPPPPIPPPRPLIQRNLQPLMRSPISRQQDPLMIPVTSSSTHPAPSISSLTSNQSSLAPPVSGNPSSAPAPVPDITATVSISVHSEKSDGPFRDSDNKILPAAALASEHSKGTSSIAITALMEEKGYQVPVLGTPSLLGQSLLHGQLIPTTGPVRINTARPGGGRPGWEHSNKLGYLVSPPQQIRRGERSCYRSINRGRHHSERSQRTQGPSLPATPVFVPVPPPPLYPPPPHTLPLPPGVPPPQFSPQFPPGQPPPAGYSVPPPGFPPAPANLSTPWVSSGVQTAHSNTIPTTQAPPLSREEFYREQRRLKEEEKKKSKLDEFTNDFAKELMEYKKIQKERRRSFSRSKSPYSGSSYSRSSYTYSKSRSGSTRSRSYSRSFSRSHSRSYSRSPPYPRRGRGKSRNYRSRSRSHGYHRSRSRSPPYRRYHSRSRSPQAFRGQSPNKRNVPQGETEREYFNRYREVPPPYDMKAYYGRSVDFRDPFEKERYREWERKYREWYEKYYKGYAAGAQPRPSANRENFSPERFLPLNIRNSPFTRGRREDYVGGQSHRSRNIGSNYPEKLSARDGHNQKDNTKSKEKESENAPGDGKGNKHKKHRKRRKGEESEGFLNPELLETSRKSREPTGVEENKTDSLFVLPSRDDATPVRDEPMDAESITFKSVSEKDKRERDKPKAKGDKTKRKNDGSAVSKKENIVKPAKGPQEKVDGERERSPRSEPPIKKAKEETPKTDNTKSSSSSQKDEKITGTPRKAHSKSAKEHQETKPVKEEKVKKDYSKDVKSEKLTTKEEKAKKPNEKNKPLDNKGEKRKRKTEEKGVDKDFESSSMKISKLEVTEIVKPSPKRKMEPDTEKMDRTPEKDKISLSAPAKKIKLNRETGKKIGSTENISNTKEPSEKLESTSSKVKQEKVKGKVRRKVTGTEGSSSTLVDYTSTSSTGGSPVRKSEEKTDTKRTVIKTMEEYNNDNTAPAEDVIIMIQVPQSKWDKDDFESEEEDVKSTQPISSVGKPASVIKNVSTKPSNIVKYPEKESEPSEKIQKFTKDVSHEIIQHEVKSSKNSASSEKGKTKDRDYSVLEKENPEKRKNSTQPEKESNLDRLNEQGNFKSLSQSSKEARTSDKHDSTRASSNKDFTPNRDKKTDYDTREYSSSKRRDEKNELTRRKDSPSRNKDSASGQKNKPREERDLPKKGTGDSKKSNSSPSRDRKPHDHKATYDTKRPNEETKSVDKNPCKDREKHVLEARNNKESSGNKLLYILNPPETQVEKEQITGQIDKSTVKPKPQLSHSSRLSSDLTRETDEAAFEPDYNESDSESNVSVKEEESSGNISKDLKDKIVEKAKESLDTAAVVQVGISRNQSHSSPSVSPSRSHSPSGSQTRSHSSSASSAESQDSKKKKKKKEKKKHKKHKKHKKHKKHAGTEVELEKSQKHKHKKKKSKKNKDKEKEKEKDDQKVKSVTV</sequence>
<proteinExistence type="evidence at protein level"/>
<dbReference type="EC" id="2.3.2.27"/>
<dbReference type="EMBL" id="AB112074">
    <property type="protein sequence ID" value="BAC77636.1"/>
    <property type="molecule type" value="mRNA"/>
</dbReference>
<dbReference type="EMBL" id="AB112075">
    <property type="protein sequence ID" value="BAC77637.1"/>
    <property type="molecule type" value="mRNA"/>
</dbReference>
<dbReference type="EMBL" id="CH471145">
    <property type="protein sequence ID" value="EAW55789.1"/>
    <property type="molecule type" value="Genomic_DNA"/>
</dbReference>
<dbReference type="EMBL" id="BC029352">
    <property type="protein sequence ID" value="AAH29352.1"/>
    <property type="molecule type" value="mRNA"/>
</dbReference>
<dbReference type="EMBL" id="BC063524">
    <property type="protein sequence ID" value="AAH63524.1"/>
    <property type="status" value="ALT_SEQ"/>
    <property type="molecule type" value="mRNA"/>
</dbReference>
<dbReference type="EMBL" id="BC073938">
    <property type="protein sequence ID" value="AAH73938.1"/>
    <property type="molecule type" value="mRNA"/>
</dbReference>
<dbReference type="EMBL" id="BC101139">
    <property type="protein sequence ID" value="AAI01140.1"/>
    <property type="molecule type" value="mRNA"/>
</dbReference>
<dbReference type="EMBL" id="BC101140">
    <property type="protein sequence ID" value="AAI01141.1"/>
    <property type="molecule type" value="mRNA"/>
</dbReference>
<dbReference type="EMBL" id="BC101141">
    <property type="protein sequence ID" value="AAI01142.1"/>
    <property type="molecule type" value="mRNA"/>
</dbReference>
<dbReference type="EMBL" id="BC101142">
    <property type="protein sequence ID" value="AAI01143.1"/>
    <property type="molecule type" value="mRNA"/>
</dbReference>
<dbReference type="EMBL" id="BC114353">
    <property type="protein sequence ID" value="AAI14354.1"/>
    <property type="molecule type" value="mRNA"/>
</dbReference>
<dbReference type="EMBL" id="BC114354">
    <property type="protein sequence ID" value="AAI14355.1"/>
    <property type="molecule type" value="mRNA"/>
</dbReference>
<dbReference type="EMBL" id="BC118667">
    <property type="protein sequence ID" value="AAI18668.1"/>
    <property type="molecule type" value="mRNA"/>
</dbReference>
<dbReference type="EMBL" id="BC139830">
    <property type="protein sequence ID" value="AAI39831.1"/>
    <property type="molecule type" value="mRNA"/>
</dbReference>
<dbReference type="EMBL" id="AF063596">
    <property type="protein sequence ID" value="AAG43155.1"/>
    <property type="status" value="ALT_SEQ"/>
    <property type="molecule type" value="mRNA"/>
</dbReference>
<dbReference type="EMBL" id="AY072922">
    <property type="protein sequence ID" value="AAL68925.1"/>
    <property type="status" value="ALT_SEQ"/>
    <property type="molecule type" value="mRNA"/>
</dbReference>
<dbReference type="EMBL" id="AF352051">
    <property type="protein sequence ID" value="AAL05625.1"/>
    <property type="status" value="ALT_FRAME"/>
    <property type="molecule type" value="mRNA"/>
</dbReference>
<dbReference type="EMBL" id="X85133">
    <property type="protein sequence ID" value="CAA59445.1"/>
    <property type="status" value="ALT_FRAME"/>
    <property type="molecule type" value="mRNA"/>
</dbReference>
<dbReference type="EMBL" id="AK026954">
    <property type="protein sequence ID" value="BAB15600.1"/>
    <property type="molecule type" value="mRNA"/>
</dbReference>
<dbReference type="EMBL" id="AL359564">
    <property type="protein sequence ID" value="CAB94869.1"/>
    <property type="molecule type" value="mRNA"/>
</dbReference>
<dbReference type="CCDS" id="CCDS10621.1">
    <molecule id="Q7Z6E9-1"/>
</dbReference>
<dbReference type="CCDS" id="CCDS10622.1">
    <molecule id="Q7Z6E9-2"/>
</dbReference>
<dbReference type="CCDS" id="CCDS45444.1">
    <molecule id="Q7Z6E9-3"/>
</dbReference>
<dbReference type="PIR" id="A57640">
    <property type="entry name" value="A57640"/>
</dbReference>
<dbReference type="PIR" id="T50609">
    <property type="entry name" value="T50609"/>
</dbReference>
<dbReference type="RefSeq" id="NP_008841.2">
    <molecule id="Q7Z6E9-1"/>
    <property type="nucleotide sequence ID" value="NM_006910.4"/>
</dbReference>
<dbReference type="RefSeq" id="NP_061173.1">
    <molecule id="Q7Z6E9-2"/>
    <property type="nucleotide sequence ID" value="NM_018703.4"/>
</dbReference>
<dbReference type="RefSeq" id="NP_116015.2">
    <molecule id="Q7Z6E9-3"/>
    <property type="nucleotide sequence ID" value="NM_032626.5"/>
</dbReference>
<dbReference type="PDB" id="2C7H">
    <property type="method" value="NMR"/>
    <property type="chains" value="A=1-81"/>
</dbReference>
<dbReference type="PDB" id="2YSA">
    <property type="method" value="NMR"/>
    <property type="chains" value="A=159-206"/>
</dbReference>
<dbReference type="PDB" id="2YUR">
    <property type="method" value="NMR"/>
    <property type="chains" value="A=249-309"/>
</dbReference>
<dbReference type="PDB" id="3ZTG">
    <property type="method" value="NMR"/>
    <property type="chains" value="A/B=249-335"/>
</dbReference>
<dbReference type="PDB" id="6E5X">
    <property type="method" value="X-ray"/>
    <property type="resolution" value="1.50 A"/>
    <property type="chains" value="B=554-568"/>
</dbReference>
<dbReference type="PDBsum" id="2C7H"/>
<dbReference type="PDBsum" id="2YSA"/>
<dbReference type="PDBsum" id="2YUR"/>
<dbReference type="PDBsum" id="3ZTG"/>
<dbReference type="PDBsum" id="6E5X"/>
<dbReference type="BMRB" id="Q7Z6E9"/>
<dbReference type="EMDB" id="EMD-14185"/>
<dbReference type="SMR" id="Q7Z6E9"/>
<dbReference type="BioGRID" id="111865">
    <property type="interactions" value="259"/>
</dbReference>
<dbReference type="DIP" id="DIP-46897N"/>
<dbReference type="FunCoup" id="Q7Z6E9">
    <property type="interactions" value="3503"/>
</dbReference>
<dbReference type="IntAct" id="Q7Z6E9">
    <property type="interactions" value="84"/>
</dbReference>
<dbReference type="MINT" id="Q7Z6E9"/>
<dbReference type="STRING" id="9606.ENSP00000317872"/>
<dbReference type="GlyCosmos" id="Q7Z6E9">
    <property type="glycosylation" value="3 sites, 1 glycan"/>
</dbReference>
<dbReference type="GlyGen" id="Q7Z6E9">
    <property type="glycosylation" value="12 sites, 3 N-linked glycans (3 sites), 1 O-linked glycan (9 sites)"/>
</dbReference>
<dbReference type="iPTMnet" id="Q7Z6E9"/>
<dbReference type="MetOSite" id="Q7Z6E9"/>
<dbReference type="PhosphoSitePlus" id="Q7Z6E9"/>
<dbReference type="BioMuta" id="RBBP6"/>
<dbReference type="DMDM" id="74762440"/>
<dbReference type="jPOST" id="Q7Z6E9"/>
<dbReference type="MassIVE" id="Q7Z6E9"/>
<dbReference type="PaxDb" id="9606-ENSP00000317872"/>
<dbReference type="PeptideAtlas" id="Q7Z6E9"/>
<dbReference type="ProteomicsDB" id="69396">
    <molecule id="Q7Z6E9-1"/>
</dbReference>
<dbReference type="ProteomicsDB" id="69397">
    <molecule id="Q7Z6E9-2"/>
</dbReference>
<dbReference type="ProteomicsDB" id="69398">
    <molecule id="Q7Z6E9-3"/>
</dbReference>
<dbReference type="ProteomicsDB" id="69399">
    <molecule id="Q7Z6E9-4"/>
</dbReference>
<dbReference type="Pumba" id="Q7Z6E9"/>
<dbReference type="Antibodypedia" id="26070">
    <property type="antibodies" value="353 antibodies from 30 providers"/>
</dbReference>
<dbReference type="DNASU" id="5930"/>
<dbReference type="Ensembl" id="ENST00000319715.10">
    <molecule id="Q7Z6E9-1"/>
    <property type="protein sequence ID" value="ENSP00000317872.4"/>
    <property type="gene ID" value="ENSG00000122257.20"/>
</dbReference>
<dbReference type="Ensembl" id="ENST00000348022.6">
    <molecule id="Q7Z6E9-2"/>
    <property type="protein sequence ID" value="ENSP00000316291.4"/>
    <property type="gene ID" value="ENSG00000122257.20"/>
</dbReference>
<dbReference type="Ensembl" id="ENST00000381039.7">
    <molecule id="Q7Z6E9-4"/>
    <property type="protein sequence ID" value="ENSP00000370427.3"/>
    <property type="gene ID" value="ENSG00000122257.20"/>
</dbReference>
<dbReference type="Ensembl" id="ENST00000452655.6">
    <molecule id="Q7Z6E9-3"/>
    <property type="protein sequence ID" value="ENSP00000390537.2"/>
    <property type="gene ID" value="ENSG00000122257.20"/>
</dbReference>
<dbReference type="GeneID" id="5930"/>
<dbReference type="KEGG" id="hsa:5930"/>
<dbReference type="MANE-Select" id="ENST00000319715.10">
    <property type="protein sequence ID" value="ENSP00000317872.4"/>
    <property type="RefSeq nucleotide sequence ID" value="NM_006910.5"/>
    <property type="RefSeq protein sequence ID" value="NP_008841.2"/>
</dbReference>
<dbReference type="UCSC" id="uc002dmg.4">
    <molecule id="Q7Z6E9-1"/>
    <property type="organism name" value="human"/>
</dbReference>
<dbReference type="AGR" id="HGNC:9889"/>
<dbReference type="CTD" id="5930"/>
<dbReference type="DisGeNET" id="5930"/>
<dbReference type="GeneCards" id="RBBP6"/>
<dbReference type="HGNC" id="HGNC:9889">
    <property type="gene designation" value="RBBP6"/>
</dbReference>
<dbReference type="HPA" id="ENSG00000122257">
    <property type="expression patterns" value="Tissue enhanced (bone)"/>
</dbReference>
<dbReference type="MalaCards" id="RBBP6"/>
<dbReference type="MIM" id="600938">
    <property type="type" value="gene"/>
</dbReference>
<dbReference type="neXtProt" id="NX_Q7Z6E9"/>
<dbReference type="OpenTargets" id="ENSG00000122257"/>
<dbReference type="PharmGKB" id="PA34253"/>
<dbReference type="VEuPathDB" id="HostDB:ENSG00000122257"/>
<dbReference type="eggNOG" id="KOG0314">
    <property type="taxonomic scope" value="Eukaryota"/>
</dbReference>
<dbReference type="GeneTree" id="ENSGT00940000157561"/>
<dbReference type="HOGENOM" id="CLU_239162_0_0_1"/>
<dbReference type="InParanoid" id="Q7Z6E9"/>
<dbReference type="OMA" id="IRAMMTQ"/>
<dbReference type="OrthoDB" id="106784at2759"/>
<dbReference type="PAN-GO" id="Q7Z6E9">
    <property type="GO annotations" value="4 GO annotations based on evolutionary models"/>
</dbReference>
<dbReference type="PhylomeDB" id="Q7Z6E9"/>
<dbReference type="TreeFam" id="TF350543"/>
<dbReference type="PathwayCommons" id="Q7Z6E9"/>
<dbReference type="Reactome" id="R-HSA-9013422">
    <property type="pathway name" value="RHOBTB1 GTPase cycle"/>
</dbReference>
<dbReference type="Reactome" id="R-HSA-983168">
    <property type="pathway name" value="Antigen processing: Ubiquitination &amp; Proteasome degradation"/>
</dbReference>
<dbReference type="SignaLink" id="Q7Z6E9"/>
<dbReference type="SIGNOR" id="Q7Z6E9"/>
<dbReference type="UniPathway" id="UPA00143"/>
<dbReference type="BioGRID-ORCS" id="5930">
    <property type="hits" value="802 hits in 1209 CRISPR screens"/>
</dbReference>
<dbReference type="CD-CODE" id="91857CE7">
    <property type="entry name" value="Nucleolus"/>
</dbReference>
<dbReference type="ChiTaRS" id="RBBP6">
    <property type="organism name" value="human"/>
</dbReference>
<dbReference type="EvolutionaryTrace" id="Q7Z6E9"/>
<dbReference type="GeneWiki" id="RBBP6"/>
<dbReference type="GenomeRNAi" id="5930"/>
<dbReference type="Pharos" id="Q7Z6E9">
    <property type="development level" value="Tbio"/>
</dbReference>
<dbReference type="PRO" id="PR:Q7Z6E9"/>
<dbReference type="Proteomes" id="UP000005640">
    <property type="component" value="Chromosome 16"/>
</dbReference>
<dbReference type="RNAct" id="Q7Z6E9">
    <property type="molecule type" value="protein"/>
</dbReference>
<dbReference type="Bgee" id="ENSG00000122257">
    <property type="expression patterns" value="Expressed in buccal mucosa cell and 203 other cell types or tissues"/>
</dbReference>
<dbReference type="ExpressionAtlas" id="Q7Z6E9">
    <property type="expression patterns" value="baseline and differential"/>
</dbReference>
<dbReference type="GO" id="GO:0005813">
    <property type="term" value="C:centrosome"/>
    <property type="evidence" value="ECO:0007669"/>
    <property type="project" value="UniProtKB-SubCell"/>
</dbReference>
<dbReference type="GO" id="GO:0005694">
    <property type="term" value="C:chromosome"/>
    <property type="evidence" value="ECO:0007669"/>
    <property type="project" value="UniProtKB-SubCell"/>
</dbReference>
<dbReference type="GO" id="GO:0005829">
    <property type="term" value="C:cytosol"/>
    <property type="evidence" value="ECO:0000304"/>
    <property type="project" value="Reactome"/>
</dbReference>
<dbReference type="GO" id="GO:0016607">
    <property type="term" value="C:nuclear speck"/>
    <property type="evidence" value="ECO:0000314"/>
    <property type="project" value="HPA"/>
</dbReference>
<dbReference type="GO" id="GO:0005730">
    <property type="term" value="C:nucleolus"/>
    <property type="evidence" value="ECO:0007669"/>
    <property type="project" value="UniProtKB-SubCell"/>
</dbReference>
<dbReference type="GO" id="GO:0005634">
    <property type="term" value="C:nucleus"/>
    <property type="evidence" value="ECO:0000318"/>
    <property type="project" value="GO_Central"/>
</dbReference>
<dbReference type="GO" id="GO:0032991">
    <property type="term" value="C:protein-containing complex"/>
    <property type="evidence" value="ECO:0000314"/>
    <property type="project" value="UniProtKB"/>
</dbReference>
<dbReference type="GO" id="GO:0019901">
    <property type="term" value="F:protein kinase binding"/>
    <property type="evidence" value="ECO:0000353"/>
    <property type="project" value="UniProtKB"/>
</dbReference>
<dbReference type="GO" id="GO:0003723">
    <property type="term" value="F:RNA binding"/>
    <property type="evidence" value="ECO:0007005"/>
    <property type="project" value="UniProtKB"/>
</dbReference>
<dbReference type="GO" id="GO:0061630">
    <property type="term" value="F:ubiquitin protein ligase activity"/>
    <property type="evidence" value="ECO:0000315"/>
    <property type="project" value="UniProtKB"/>
</dbReference>
<dbReference type="GO" id="GO:0004842">
    <property type="term" value="F:ubiquitin-protein transferase activity"/>
    <property type="evidence" value="ECO:0000314"/>
    <property type="project" value="UniProtKB"/>
</dbReference>
<dbReference type="GO" id="GO:0008270">
    <property type="term" value="F:zinc ion binding"/>
    <property type="evidence" value="ECO:0007669"/>
    <property type="project" value="UniProtKB-KW"/>
</dbReference>
<dbReference type="GO" id="GO:0006974">
    <property type="term" value="P:DNA damage response"/>
    <property type="evidence" value="ECO:0000315"/>
    <property type="project" value="UniProtKB"/>
</dbReference>
<dbReference type="GO" id="GO:0006260">
    <property type="term" value="P:DNA replication"/>
    <property type="evidence" value="ECO:0007669"/>
    <property type="project" value="UniProtKB-KW"/>
</dbReference>
<dbReference type="GO" id="GO:0048568">
    <property type="term" value="P:embryonic organ development"/>
    <property type="evidence" value="ECO:0007669"/>
    <property type="project" value="Ensembl"/>
</dbReference>
<dbReference type="GO" id="GO:0001701">
    <property type="term" value="P:in utero embryonic development"/>
    <property type="evidence" value="ECO:0007669"/>
    <property type="project" value="Ensembl"/>
</dbReference>
<dbReference type="GO" id="GO:0006397">
    <property type="term" value="P:mRNA processing"/>
    <property type="evidence" value="ECO:0007669"/>
    <property type="project" value="InterPro"/>
</dbReference>
<dbReference type="GO" id="GO:0035264">
    <property type="term" value="P:multicellular organism growth"/>
    <property type="evidence" value="ECO:0007669"/>
    <property type="project" value="Ensembl"/>
</dbReference>
<dbReference type="GO" id="GO:0016567">
    <property type="term" value="P:protein ubiquitination"/>
    <property type="evidence" value="ECO:0000318"/>
    <property type="project" value="GO_Central"/>
</dbReference>
<dbReference type="GO" id="GO:0006275">
    <property type="term" value="P:regulation of DNA replication"/>
    <property type="evidence" value="ECO:0000315"/>
    <property type="project" value="UniProtKB"/>
</dbReference>
<dbReference type="GO" id="GO:0061053">
    <property type="term" value="P:somite development"/>
    <property type="evidence" value="ECO:0007669"/>
    <property type="project" value="Ensembl"/>
</dbReference>
<dbReference type="GO" id="GO:0006511">
    <property type="term" value="P:ubiquitin-dependent protein catabolic process"/>
    <property type="evidence" value="ECO:0000314"/>
    <property type="project" value="UniProtKB"/>
</dbReference>
<dbReference type="CDD" id="cd16620">
    <property type="entry name" value="vRING-HC-C4C4_RBBP6"/>
    <property type="match status" value="1"/>
</dbReference>
<dbReference type="FunFam" id="4.10.60.10:FF:000005">
    <property type="entry name" value="E3 ubiquitin-protein ligase RBBP6"/>
    <property type="match status" value="1"/>
</dbReference>
<dbReference type="FunFam" id="3.30.40.10:FF:000139">
    <property type="entry name" value="E3 ubiquitin-protein ligase RBBP6 isoform X1"/>
    <property type="match status" value="1"/>
</dbReference>
<dbReference type="FunFam" id="3.10.20.90:FF:000070">
    <property type="entry name" value="E3 ubiquitin-protein ligase RBBP6 isoform X2"/>
    <property type="match status" value="1"/>
</dbReference>
<dbReference type="Gene3D" id="3.10.20.90">
    <property type="entry name" value="Phosphatidylinositol 3-kinase Catalytic Subunit, Chain A, domain 1"/>
    <property type="match status" value="1"/>
</dbReference>
<dbReference type="Gene3D" id="4.10.60.10">
    <property type="entry name" value="Zinc finger, CCHC-type"/>
    <property type="match status" value="1"/>
</dbReference>
<dbReference type="Gene3D" id="3.30.40.10">
    <property type="entry name" value="Zinc/RING finger domain, C3HC4 (zinc finger)"/>
    <property type="match status" value="1"/>
</dbReference>
<dbReference type="InterPro" id="IPR014891">
    <property type="entry name" value="DWNN_domain"/>
</dbReference>
<dbReference type="InterPro" id="IPR033489">
    <property type="entry name" value="RBBP6"/>
</dbReference>
<dbReference type="InterPro" id="IPR003613">
    <property type="entry name" value="Ubox_domain"/>
</dbReference>
<dbReference type="InterPro" id="IPR025829">
    <property type="entry name" value="Zn_knuckle_CX2CX3GHX4C"/>
</dbReference>
<dbReference type="InterPro" id="IPR001878">
    <property type="entry name" value="Znf_CCHC"/>
</dbReference>
<dbReference type="InterPro" id="IPR036875">
    <property type="entry name" value="Znf_CCHC_sf"/>
</dbReference>
<dbReference type="InterPro" id="IPR001841">
    <property type="entry name" value="Znf_RING"/>
</dbReference>
<dbReference type="InterPro" id="IPR013083">
    <property type="entry name" value="Znf_RING/FYVE/PHD"/>
</dbReference>
<dbReference type="PANTHER" id="PTHR15439:SF0">
    <property type="entry name" value="CELL DIVISION CYCLE AND APOPTOSIS REGULATOR PROTEIN 1-RELATED"/>
    <property type="match status" value="1"/>
</dbReference>
<dbReference type="PANTHER" id="PTHR15439">
    <property type="entry name" value="RETINOBLASTOMA-BINDING PROTEIN 6"/>
    <property type="match status" value="1"/>
</dbReference>
<dbReference type="Pfam" id="PF08783">
    <property type="entry name" value="DWNN"/>
    <property type="match status" value="1"/>
</dbReference>
<dbReference type="Pfam" id="PF04564">
    <property type="entry name" value="U-box"/>
    <property type="match status" value="1"/>
</dbReference>
<dbReference type="Pfam" id="PF13696">
    <property type="entry name" value="zf-CCHC_2"/>
    <property type="match status" value="1"/>
</dbReference>
<dbReference type="SMART" id="SM01180">
    <property type="entry name" value="DWNN"/>
    <property type="match status" value="1"/>
</dbReference>
<dbReference type="SMART" id="SM00184">
    <property type="entry name" value="RING"/>
    <property type="match status" value="1"/>
</dbReference>
<dbReference type="SMART" id="SM00343">
    <property type="entry name" value="ZnF_C2HC"/>
    <property type="match status" value="1"/>
</dbReference>
<dbReference type="SUPFAM" id="SSF57756">
    <property type="entry name" value="Retrovirus zinc finger-like domains"/>
    <property type="match status" value="1"/>
</dbReference>
<dbReference type="SUPFAM" id="SSF57850">
    <property type="entry name" value="RING/U-box"/>
    <property type="match status" value="1"/>
</dbReference>
<dbReference type="PROSITE" id="PS51282">
    <property type="entry name" value="DWNN"/>
    <property type="match status" value="1"/>
</dbReference>
<dbReference type="PROSITE" id="PS50158">
    <property type="entry name" value="ZF_CCHC"/>
    <property type="match status" value="1"/>
</dbReference>
<dbReference type="PROSITE" id="PS50089">
    <property type="entry name" value="ZF_RING_2"/>
    <property type="match status" value="1"/>
</dbReference>
<keyword id="KW-0002">3D-structure</keyword>
<keyword id="KW-0007">Acetylation</keyword>
<keyword id="KW-0025">Alternative splicing</keyword>
<keyword id="KW-0158">Chromosome</keyword>
<keyword id="KW-0963">Cytoplasm</keyword>
<keyword id="KW-0206">Cytoskeleton</keyword>
<keyword id="KW-0227">DNA damage</keyword>
<keyword id="KW-0235">DNA replication</keyword>
<keyword id="KW-0945">Host-virus interaction</keyword>
<keyword id="KW-1017">Isopeptide bond</keyword>
<keyword id="KW-0479">Metal-binding</keyword>
<keyword id="KW-0539">Nucleus</keyword>
<keyword id="KW-0597">Phosphoprotein</keyword>
<keyword id="KW-1267">Proteomics identification</keyword>
<keyword id="KW-1185">Reference proteome</keyword>
<keyword id="KW-0808">Transferase</keyword>
<keyword id="KW-0832">Ubl conjugation</keyword>
<keyword id="KW-0833">Ubl conjugation pathway</keyword>
<keyword id="KW-0862">Zinc</keyword>
<keyword id="KW-0863">Zinc-finger</keyword>
<reference key="1">
    <citation type="submission" date="2003-06" db="EMBL/GenBank/DDBJ databases">
        <title>Retinoblastoma binding protein 6 (RBBP6), mRNA.</title>
        <authorList>
            <person name="Kudo E."/>
            <person name="Itakura M."/>
        </authorList>
    </citation>
    <scope>NUCLEOTIDE SEQUENCE [MRNA] (ISOFORMS 1 AND 2)</scope>
</reference>
<reference key="2">
    <citation type="submission" date="2005-09" db="EMBL/GenBank/DDBJ databases">
        <authorList>
            <person name="Mural R.J."/>
            <person name="Istrail S."/>
            <person name="Sutton G.G."/>
            <person name="Florea L."/>
            <person name="Halpern A.L."/>
            <person name="Mobarry C.M."/>
            <person name="Lippert R."/>
            <person name="Walenz B."/>
            <person name="Shatkay H."/>
            <person name="Dew I."/>
            <person name="Miller J.R."/>
            <person name="Flanigan M.J."/>
            <person name="Edwards N.J."/>
            <person name="Bolanos R."/>
            <person name="Fasulo D."/>
            <person name="Halldorsson B.V."/>
            <person name="Hannenhalli S."/>
            <person name="Turner R."/>
            <person name="Yooseph S."/>
            <person name="Lu F."/>
            <person name="Nusskern D.R."/>
            <person name="Shue B.C."/>
            <person name="Zheng X.H."/>
            <person name="Zhong F."/>
            <person name="Delcher A.L."/>
            <person name="Huson D.H."/>
            <person name="Kravitz S.A."/>
            <person name="Mouchard L."/>
            <person name="Reinert K."/>
            <person name="Remington K.A."/>
            <person name="Clark A.G."/>
            <person name="Waterman M.S."/>
            <person name="Eichler E.E."/>
            <person name="Adams M.D."/>
            <person name="Hunkapiller M.W."/>
            <person name="Myers E.W."/>
            <person name="Venter J.C."/>
        </authorList>
    </citation>
    <scope>NUCLEOTIDE SEQUENCE [LARGE SCALE GENOMIC DNA]</scope>
</reference>
<reference key="3">
    <citation type="journal article" date="2004" name="Genome Res.">
        <title>The status, quality, and expansion of the NIH full-length cDNA project: the Mammalian Gene Collection (MGC).</title>
        <authorList>
            <consortium name="The MGC Project Team"/>
        </authorList>
    </citation>
    <scope>NUCLEOTIDE SEQUENCE [LARGE SCALE MRNA] (ISOFORM 3)</scope>
    <scope>NUCLEOTIDE SEQUENCE [LARGE SCALE MRNA] OF 1-1727 (ISOFORM 4)</scope>
    <scope>NUCLEOTIDE SEQUENCE [LARGE SCALE MRNA] OF 1427-1792 (ISOFORMS 1/2/4)</scope>
    <source>
        <tissue>Bone</tissue>
        <tissue>Kidney</tissue>
    </source>
</reference>
<reference key="4">
    <citation type="submission" date="1998-05" db="EMBL/GenBank/DDBJ databases">
        <authorList>
            <person name="Mao Y.M."/>
            <person name="Xie Y."/>
            <person name="Zheng Z.H."/>
        </authorList>
    </citation>
    <scope>NUCLEOTIDE SEQUENCE [LARGE SCALE MRNA] OF 1-55 (ISOFORMS 1/2/3/4)</scope>
    <source>
        <tissue>Fetal brain</tissue>
    </source>
</reference>
<reference key="5">
    <citation type="submission" date="2002-01" db="EMBL/GenBank/DDBJ databases">
        <title>The cDNA sequence for the human PACT gene.</title>
        <authorList>
            <person name="Ma X."/>
            <person name="Qu X."/>
            <person name="Sun L."/>
            <person name="Wu S."/>
            <person name="He F."/>
        </authorList>
    </citation>
    <scope>NUCLEOTIDE SEQUENCE [MRNA] OF 117-1792 (ISOFORM 2)</scope>
    <source>
        <tissue>Spleen</tissue>
    </source>
</reference>
<reference key="6">
    <citation type="submission" date="2001-02" db="EMBL/GenBank/DDBJ databases">
        <authorList>
            <person name="Camargo A.A."/>
            <person name="Moreira E.S."/>
            <person name="Simpson A.J.G."/>
        </authorList>
    </citation>
    <scope>NUCLEOTIDE SEQUENCE [MRNA] OF 150-1792 (ISOFORM 1)</scope>
</reference>
<reference key="7">
    <citation type="journal article" date="1995" name="Genomics">
        <title>cDNA sequence and chromosomal localization of a novel human protein, RBQ-1 (RBBP6), that binds to the retinoblastoma gene product.</title>
        <authorList>
            <person name="Sakai Y."/>
            <person name="Saijo M."/>
            <person name="Coelho K."/>
            <person name="Kishino T."/>
            <person name="Niikawa N."/>
            <person name="Taya Y."/>
        </authorList>
    </citation>
    <scope>NUCLEOTIDE SEQUENCE [MRNA] OF 150-1146 (ISOFORM 1)</scope>
    <source>
        <tissue>Lung carcinoma</tissue>
    </source>
</reference>
<reference key="8">
    <citation type="journal article" date="2004" name="Nat. Genet.">
        <title>Complete sequencing and characterization of 21,243 full-length human cDNAs.</title>
        <authorList>
            <person name="Ota T."/>
            <person name="Suzuki Y."/>
            <person name="Nishikawa T."/>
            <person name="Otsuki T."/>
            <person name="Sugiyama T."/>
            <person name="Irie R."/>
            <person name="Wakamatsu A."/>
            <person name="Hayashi K."/>
            <person name="Sato H."/>
            <person name="Nagai K."/>
            <person name="Kimura K."/>
            <person name="Makita H."/>
            <person name="Sekine M."/>
            <person name="Obayashi M."/>
            <person name="Nishi T."/>
            <person name="Shibahara T."/>
            <person name="Tanaka T."/>
            <person name="Ishii S."/>
            <person name="Yamamoto J."/>
            <person name="Saito K."/>
            <person name="Kawai Y."/>
            <person name="Isono Y."/>
            <person name="Nakamura Y."/>
            <person name="Nagahari K."/>
            <person name="Murakami K."/>
            <person name="Yasuda T."/>
            <person name="Iwayanagi T."/>
            <person name="Wagatsuma M."/>
            <person name="Shiratori A."/>
            <person name="Sudo H."/>
            <person name="Hosoiri T."/>
            <person name="Kaku Y."/>
            <person name="Kodaira H."/>
            <person name="Kondo H."/>
            <person name="Sugawara M."/>
            <person name="Takahashi M."/>
            <person name="Kanda K."/>
            <person name="Yokoi T."/>
            <person name="Furuya T."/>
            <person name="Kikkawa E."/>
            <person name="Omura Y."/>
            <person name="Abe K."/>
            <person name="Kamihara K."/>
            <person name="Katsuta N."/>
            <person name="Sato K."/>
            <person name="Tanikawa M."/>
            <person name="Yamazaki M."/>
            <person name="Ninomiya K."/>
            <person name="Ishibashi T."/>
            <person name="Yamashita H."/>
            <person name="Murakawa K."/>
            <person name="Fujimori K."/>
            <person name="Tanai H."/>
            <person name="Kimata M."/>
            <person name="Watanabe M."/>
            <person name="Hiraoka S."/>
            <person name="Chiba Y."/>
            <person name="Ishida S."/>
            <person name="Ono Y."/>
            <person name="Takiguchi S."/>
            <person name="Watanabe S."/>
            <person name="Yosida M."/>
            <person name="Hotuta T."/>
            <person name="Kusano J."/>
            <person name="Kanehori K."/>
            <person name="Takahashi-Fujii A."/>
            <person name="Hara H."/>
            <person name="Tanase T.-O."/>
            <person name="Nomura Y."/>
            <person name="Togiya S."/>
            <person name="Komai F."/>
            <person name="Hara R."/>
            <person name="Takeuchi K."/>
            <person name="Arita M."/>
            <person name="Imose N."/>
            <person name="Musashino K."/>
            <person name="Yuuki H."/>
            <person name="Oshima A."/>
            <person name="Sasaki N."/>
            <person name="Aotsuka S."/>
            <person name="Yoshikawa Y."/>
            <person name="Matsunawa H."/>
            <person name="Ichihara T."/>
            <person name="Shiohata N."/>
            <person name="Sano S."/>
            <person name="Moriya S."/>
            <person name="Momiyama H."/>
            <person name="Satoh N."/>
            <person name="Takami S."/>
            <person name="Terashima Y."/>
            <person name="Suzuki O."/>
            <person name="Nakagawa S."/>
            <person name="Senoh A."/>
            <person name="Mizoguchi H."/>
            <person name="Goto Y."/>
            <person name="Shimizu F."/>
            <person name="Wakebe H."/>
            <person name="Hishigaki H."/>
            <person name="Watanabe T."/>
            <person name="Sugiyama A."/>
            <person name="Takemoto M."/>
            <person name="Kawakami B."/>
            <person name="Yamazaki M."/>
            <person name="Watanabe K."/>
            <person name="Kumagai A."/>
            <person name="Itakura S."/>
            <person name="Fukuzumi Y."/>
            <person name="Fujimori Y."/>
            <person name="Komiyama M."/>
            <person name="Tashiro H."/>
            <person name="Tanigami A."/>
            <person name="Fujiwara T."/>
            <person name="Ono T."/>
            <person name="Yamada K."/>
            <person name="Fujii Y."/>
            <person name="Ozaki K."/>
            <person name="Hirao M."/>
            <person name="Ohmori Y."/>
            <person name="Kawabata A."/>
            <person name="Hikiji T."/>
            <person name="Kobatake N."/>
            <person name="Inagaki H."/>
            <person name="Ikema Y."/>
            <person name="Okamoto S."/>
            <person name="Okitani R."/>
            <person name="Kawakami T."/>
            <person name="Noguchi S."/>
            <person name="Itoh T."/>
            <person name="Shigeta K."/>
            <person name="Senba T."/>
            <person name="Matsumura K."/>
            <person name="Nakajima Y."/>
            <person name="Mizuno T."/>
            <person name="Morinaga M."/>
            <person name="Sasaki M."/>
            <person name="Togashi T."/>
            <person name="Oyama M."/>
            <person name="Hata H."/>
            <person name="Watanabe M."/>
            <person name="Komatsu T."/>
            <person name="Mizushima-Sugano J."/>
            <person name="Satoh T."/>
            <person name="Shirai Y."/>
            <person name="Takahashi Y."/>
            <person name="Nakagawa K."/>
            <person name="Okumura K."/>
            <person name="Nagase T."/>
            <person name="Nomura N."/>
            <person name="Kikuchi H."/>
            <person name="Masuho Y."/>
            <person name="Yamashita R."/>
            <person name="Nakai K."/>
            <person name="Yada T."/>
            <person name="Nakamura Y."/>
            <person name="Ohara O."/>
            <person name="Isogai T."/>
            <person name="Sugano S."/>
        </authorList>
    </citation>
    <scope>NUCLEOTIDE SEQUENCE [LARGE SCALE MRNA] OF 1165-1792 (ISOFORMS 1/2)</scope>
    <source>
        <tissue>Hepatoma</tissue>
    </source>
</reference>
<reference key="9">
    <citation type="journal article" date="2007" name="BMC Genomics">
        <title>The full-ORF clone resource of the German cDNA consortium.</title>
        <authorList>
            <person name="Bechtel S."/>
            <person name="Rosenfelder H."/>
            <person name="Duda A."/>
            <person name="Schmidt C.P."/>
            <person name="Ernst U."/>
            <person name="Wellenreuther R."/>
            <person name="Mehrle A."/>
            <person name="Schuster C."/>
            <person name="Bahr A."/>
            <person name="Bloecker H."/>
            <person name="Heubner D."/>
            <person name="Hoerlein A."/>
            <person name="Michel G."/>
            <person name="Wedler H."/>
            <person name="Koehrer K."/>
            <person name="Ottenwaelder B."/>
            <person name="Poustka A."/>
            <person name="Wiemann S."/>
            <person name="Schupp I."/>
        </authorList>
    </citation>
    <scope>NUCLEOTIDE SEQUENCE [LARGE SCALE MRNA] OF 1264-1792 (ISOFORMS 1/2)</scope>
    <source>
        <tissue>Amygdala</tissue>
    </source>
</reference>
<reference key="10">
    <citation type="journal article" date="2002" name="J. Cell. Physiol.">
        <title>P2P-R protein localizes to the nucleolus of interphase cells and the periphery of chromosomes in mitotic cells which show maximum P2P-R immunoreactivity.</title>
        <authorList>
            <person name="Gao S."/>
            <person name="Witte M.M."/>
            <person name="Scott R.E."/>
        </authorList>
    </citation>
    <scope>SUBCELLULAR LOCATION</scope>
</reference>
<reference key="11">
    <citation type="journal article" date="2002" name="J. Cell. Physiol.">
        <authorList>
            <person name="Gao S."/>
            <person name="Witte M.M."/>
            <person name="Scott R.E."/>
        </authorList>
    </citation>
    <scope>ERRATUM OF PUBMED:12064457</scope>
</reference>
<reference key="12">
    <citation type="journal article" date="2004" name="Clin. Cancer Res.">
        <title>Proliferation potential-related protein, an ideal esophageal cancer antigen for immunotherapy, identified using complementary DNA microarray analysis.</title>
        <authorList>
            <person name="Yoshitake Y."/>
            <person name="Nakatsura T."/>
            <person name="Monji M."/>
            <person name="Senju S."/>
            <person name="Matsuyoshi H."/>
            <person name="Tsukamoto H."/>
            <person name="Hosaka S."/>
            <person name="Komori H."/>
            <person name="Fukuma D."/>
            <person name="Ikuta Y."/>
            <person name="Katagiri T."/>
            <person name="Furukawa Y."/>
            <person name="Ito H."/>
            <person name="Shinohara M."/>
            <person name="Nakamura Y."/>
            <person name="Nishimura Y."/>
        </authorList>
    </citation>
    <scope>SUBCELLULAR LOCATION</scope>
    <scope>TISSUE SPECIFICITY</scope>
    <scope>OVEREXPRESSION IN ESOPHAGEAL CANCER</scope>
</reference>
<reference key="13">
    <citation type="journal article" date="2006" name="Cell">
        <title>Global, in vivo, and site-specific phosphorylation dynamics in signaling networks.</title>
        <authorList>
            <person name="Olsen J.V."/>
            <person name="Blagoev B."/>
            <person name="Gnad F."/>
            <person name="Macek B."/>
            <person name="Kumar C."/>
            <person name="Mortensen P."/>
            <person name="Mann M."/>
        </authorList>
    </citation>
    <scope>PHOSPHORYLATION [LARGE SCALE ANALYSIS] AT SER-244; SER-245; SER-246; SER-247; SER-360; SER-770; SER-772; SER-861; SER-1179 AND SER-1328</scope>
    <scope>IDENTIFICATION BY MASS SPECTROMETRY [LARGE SCALE ANALYSIS]</scope>
    <source>
        <tissue>Cervix carcinoma</tissue>
    </source>
</reference>
<reference key="14">
    <citation type="journal article" date="2006" name="Nat. Biotechnol.">
        <title>A probability-based approach for high-throughput protein phosphorylation analysis and site localization.</title>
        <authorList>
            <person name="Beausoleil S.A."/>
            <person name="Villen J."/>
            <person name="Gerber S.A."/>
            <person name="Rush J."/>
            <person name="Gygi S.P."/>
        </authorList>
    </citation>
    <scope>PHOSPHORYLATION [LARGE SCALE ANALYSIS] AT SER-516</scope>
    <scope>IDENTIFICATION BY MASS SPECTROMETRY [LARGE SCALE ANALYSIS]</scope>
    <source>
        <tissue>Cervix carcinoma</tissue>
    </source>
</reference>
<reference key="15">
    <citation type="journal article" date="2007" name="Proc. Natl. Acad. Sci. U.S.A.">
        <title>PACT is a negative regulator of p53 and essential for cell growth and embryonic development.</title>
        <authorList>
            <person name="Li L."/>
            <person name="Deng B."/>
            <person name="Xing G."/>
            <person name="Teng Y."/>
            <person name="Tian C."/>
            <person name="Cheng X."/>
            <person name="Yin X."/>
            <person name="Yang J."/>
            <person name="Gao X."/>
            <person name="Zhu Y."/>
            <person name="Sun Q."/>
            <person name="Zhang L."/>
            <person name="Yang X."/>
            <person name="He F."/>
        </authorList>
    </citation>
    <scope>INTERACTION WITH MDM2</scope>
</reference>
<reference key="16">
    <citation type="journal article" date="2007" name="Science">
        <title>ATM and ATR substrate analysis reveals extensive protein networks responsive to DNA damage.</title>
        <authorList>
            <person name="Matsuoka S."/>
            <person name="Ballif B.A."/>
            <person name="Smogorzewska A."/>
            <person name="McDonald E.R. III"/>
            <person name="Hurov K.E."/>
            <person name="Luo J."/>
            <person name="Bakalarski C.E."/>
            <person name="Zhao Z."/>
            <person name="Solimini N."/>
            <person name="Lerenthal Y."/>
            <person name="Shiloh Y."/>
            <person name="Gygi S.P."/>
            <person name="Elledge S.J."/>
        </authorList>
    </citation>
    <scope>IDENTIFICATION BY MASS SPECTROMETRY [LARGE SCALE ANALYSIS]</scope>
    <source>
        <tissue>Embryonic kidney</tissue>
    </source>
</reference>
<reference key="17">
    <citation type="journal article" date="2008" name="J. Mol. Biol.">
        <title>RBBP6 interacts with multifunctional protein YB-1 through its RING finger domain, leading to ubiquitination and proteosomal degradation of YB-1.</title>
        <authorList>
            <person name="Chibi M."/>
            <person name="Meyer M."/>
            <person name="Skepu A."/>
            <person name="Rees D.J.G."/>
            <person name="Moolman-Smook J.C."/>
            <person name="Pugh D.J."/>
        </authorList>
    </citation>
    <scope>FUNCTION</scope>
    <scope>INTERACTION WITH YBX1</scope>
</reference>
<reference key="18">
    <citation type="journal article" date="2008" name="J. Proteome Res.">
        <title>Combining protein-based IMAC, peptide-based IMAC, and MudPIT for efficient phosphoproteomic analysis.</title>
        <authorList>
            <person name="Cantin G.T."/>
            <person name="Yi W."/>
            <person name="Lu B."/>
            <person name="Park S.K."/>
            <person name="Xu T."/>
            <person name="Lee J.-D."/>
            <person name="Yates J.R. III"/>
        </authorList>
    </citation>
    <scope>PHOSPHORYLATION [LARGE SCALE ANALYSIS] AT SER-516</scope>
    <scope>IDENTIFICATION BY MASS SPECTROMETRY [LARGE SCALE ANALYSIS]</scope>
    <source>
        <tissue>Cervix carcinoma</tissue>
    </source>
</reference>
<reference key="19">
    <citation type="journal article" date="2008" name="Proc. Natl. Acad. Sci. U.S.A.">
        <title>A quantitative atlas of mitotic phosphorylation.</title>
        <authorList>
            <person name="Dephoure N."/>
            <person name="Zhou C."/>
            <person name="Villen J."/>
            <person name="Beausoleil S.A."/>
            <person name="Bakalarski C.E."/>
            <person name="Elledge S.J."/>
            <person name="Gygi S.P."/>
        </authorList>
    </citation>
    <scope>PHOSPHORYLATION [LARGE SCALE ANALYSIS] AT SER-360; SER-516; SER-1179; THR-1468; SER-1646 AND SER-1648</scope>
    <scope>IDENTIFICATION BY MASS SPECTROMETRY [LARGE SCALE ANALYSIS]</scope>
    <source>
        <tissue>Cervix carcinoma</tissue>
    </source>
</reference>
<reference key="20">
    <citation type="journal article" date="2008" name="Proteomics">
        <title>Large-scale phosphoproteome analysis of human liver tissue by enrichment and fractionation of phosphopeptides with strong anion exchange chromatography.</title>
        <authorList>
            <person name="Han G."/>
            <person name="Ye M."/>
            <person name="Zhou H."/>
            <person name="Jiang X."/>
            <person name="Feng S."/>
            <person name="Jiang X."/>
            <person name="Tian R."/>
            <person name="Wan D."/>
            <person name="Zou H."/>
            <person name="Gu J."/>
        </authorList>
    </citation>
    <scope>PHOSPHORYLATION [LARGE SCALE ANALYSIS] AT SER-1328</scope>
    <scope>IDENTIFICATION BY MASS SPECTROMETRY [LARGE SCALE ANALYSIS]</scope>
    <source>
        <tissue>Liver</tissue>
    </source>
</reference>
<reference key="21">
    <citation type="journal article" date="2009" name="Sci. Signal.">
        <title>Quantitative phosphoproteomic analysis of T cell receptor signaling reveals system-wide modulation of protein-protein interactions.</title>
        <authorList>
            <person name="Mayya V."/>
            <person name="Lundgren D.H."/>
            <person name="Hwang S.-I."/>
            <person name="Rezaul K."/>
            <person name="Wu L."/>
            <person name="Eng J.K."/>
            <person name="Rodionov V."/>
            <person name="Han D.K."/>
        </authorList>
    </citation>
    <scope>PHOSPHORYLATION [LARGE SCALE ANALYSIS] AT SER-516; SER-1179; SER-1277; SER-1328 AND SER-1648</scope>
    <scope>IDENTIFICATION BY MASS SPECTROMETRY [LARGE SCALE ANALYSIS]</scope>
    <source>
        <tissue>Leukemic T-cell</tissue>
    </source>
</reference>
<reference key="22">
    <citation type="journal article" date="2010" name="J. Proteome Res.">
        <title>Characterization of hNek6 interactome reveals an important role for its short N-terminal domain and colocalization with proteins at the centrosome.</title>
        <authorList>
            <person name="Vaz Meirelles G."/>
            <person name="Ferreira Lanza D.C."/>
            <person name="da Silva J.C."/>
            <person name="Santana Bernachi J."/>
            <person name="Paes Leme A.F."/>
            <person name="Kobarg J."/>
        </authorList>
    </citation>
    <scope>SUBCELLULAR LOCATION</scope>
    <scope>INTERACTION WITH NEK6</scope>
    <scope>PHOSPHORYLATION</scope>
</reference>
<reference key="23">
    <citation type="journal article" date="2010" name="Sci. Signal.">
        <title>Quantitative phosphoproteomics reveals widespread full phosphorylation site occupancy during mitosis.</title>
        <authorList>
            <person name="Olsen J.V."/>
            <person name="Vermeulen M."/>
            <person name="Santamaria A."/>
            <person name="Kumar C."/>
            <person name="Miller M.L."/>
            <person name="Jensen L.J."/>
            <person name="Gnad F."/>
            <person name="Cox J."/>
            <person name="Jensen T.S."/>
            <person name="Nigg E.A."/>
            <person name="Brunak S."/>
            <person name="Mann M."/>
        </authorList>
    </citation>
    <scope>PHOSPHORYLATION [LARGE SCALE ANALYSIS] AT SER-244; SER-245; SER-246; SER-247; SER-516; SER-861; SER-1179 AND SER-1328</scope>
    <scope>IDENTIFICATION BY MASS SPECTROMETRY [LARGE SCALE ANALYSIS]</scope>
    <source>
        <tissue>Cervix carcinoma</tissue>
    </source>
</reference>
<reference key="24">
    <citation type="journal article" date="2011" name="Sci. Signal.">
        <title>System-wide temporal characterization of the proteome and phosphoproteome of human embryonic stem cell differentiation.</title>
        <authorList>
            <person name="Rigbolt K.T."/>
            <person name="Prokhorova T.A."/>
            <person name="Akimov V."/>
            <person name="Henningsen J."/>
            <person name="Johansen P.T."/>
            <person name="Kratchmarova I."/>
            <person name="Kassem M."/>
            <person name="Mann M."/>
            <person name="Olsen J.V."/>
            <person name="Blagoev B."/>
        </authorList>
    </citation>
    <scope>PHOSPHORYLATION [LARGE SCALE ANALYSIS] AT SER-780; SER-1179 AND SER-1328</scope>
    <scope>IDENTIFICATION BY MASS SPECTROMETRY [LARGE SCALE ANALYSIS]</scope>
</reference>
<reference key="25">
    <citation type="journal article" date="2013" name="J. Proteome Res.">
        <title>Toward a comprehensive characterization of a human cancer cell phosphoproteome.</title>
        <authorList>
            <person name="Zhou H."/>
            <person name="Di Palma S."/>
            <person name="Preisinger C."/>
            <person name="Peng M."/>
            <person name="Polat A.N."/>
            <person name="Heck A.J."/>
            <person name="Mohammed S."/>
        </authorList>
    </citation>
    <scope>PHOSPHORYLATION [LARGE SCALE ANALYSIS] AT SER-360; SER-516; SER-768; SER-770; SER-772; SER-815; SER-861; SER-873; SER-957; THR-984; SER-1179; SER-1221; SER-1277; SER-1328; SER-1341 AND SER-1347</scope>
    <scope>IDENTIFICATION BY MASS SPECTROMETRY [LARGE SCALE ANALYSIS]</scope>
    <source>
        <tissue>Cervix carcinoma</tissue>
        <tissue>Erythroleukemia</tissue>
    </source>
</reference>
<reference key="26">
    <citation type="journal article" date="2014" name="Cell Rep.">
        <title>The RBBP6/ZBTB38/MCM10 axis regulates DNA replication and common fragile site stability.</title>
        <authorList>
            <person name="Miotto B."/>
            <person name="Chibi M."/>
            <person name="Xie P."/>
            <person name="Koundrioukoff S."/>
            <person name="Moolman-Smook H."/>
            <person name="Pugh D."/>
            <person name="Debatisse M."/>
            <person name="He F."/>
            <person name="Zhang L."/>
            <person name="Defossez P.A."/>
        </authorList>
    </citation>
    <scope>FUNCTION</scope>
    <scope>INTERACTION WITH ZBTB38</scope>
</reference>
<reference key="27">
    <citation type="journal article" date="2014" name="J. Proteomics">
        <title>An enzyme assisted RP-RPLC approach for in-depth analysis of human liver phosphoproteome.</title>
        <authorList>
            <person name="Bian Y."/>
            <person name="Song C."/>
            <person name="Cheng K."/>
            <person name="Dong M."/>
            <person name="Wang F."/>
            <person name="Huang J."/>
            <person name="Sun D."/>
            <person name="Wang L."/>
            <person name="Ye M."/>
            <person name="Zou H."/>
        </authorList>
    </citation>
    <scope>PHOSPHORYLATION [LARGE SCALE ANALYSIS] AT THR-984 AND SER-1277</scope>
    <scope>IDENTIFICATION BY MASS SPECTROMETRY [LARGE SCALE ANALYSIS]</scope>
    <source>
        <tissue>Liver</tissue>
    </source>
</reference>
<reference key="28">
    <citation type="journal article" date="2015" name="Mol. Cell. Proteomics">
        <title>System-wide analysis of SUMOylation dynamics in response to replication stress reveals novel small ubiquitin-like modified target proteins and acceptor lysines relevant for genome stability.</title>
        <authorList>
            <person name="Xiao Z."/>
            <person name="Chang J.G."/>
            <person name="Hendriks I.A."/>
            <person name="Sigurdsson J.O."/>
            <person name="Olsen J.V."/>
            <person name="Vertegaal A.C."/>
        </authorList>
    </citation>
    <scope>SUMOYLATION [LARGE SCALE ANALYSIS] AT LYS-1106 AND LYS-1169</scope>
    <scope>IDENTIFICATION BY MASS SPECTROMETRY [LARGE SCALE ANALYSIS]</scope>
</reference>
<reference key="29">
    <citation type="journal article" date="2017" name="Nat. Struct. Mol. Biol.">
        <title>Site-specific mapping of the human SUMO proteome reveals co-modification with phosphorylation.</title>
        <authorList>
            <person name="Hendriks I.A."/>
            <person name="Lyon D."/>
            <person name="Young C."/>
            <person name="Jensen L.J."/>
            <person name="Vertegaal A.C."/>
            <person name="Nielsen M.L."/>
        </authorList>
    </citation>
    <scope>SUMOYLATION [LARGE SCALE ANALYSIS] AT LYS-1169</scope>
    <scope>IDENTIFICATION BY MASS SPECTROMETRY [LARGE SCALE ANALYSIS]</scope>
</reference>
<reference key="30">
    <citation type="journal article" date="2006" name="BMC Struct. Biol.">
        <title>DWNN, a novel ubiquitin-like domain, implicates RBBP6 in mRNA processing and ubiquitin-like pathways.</title>
        <authorList>
            <person name="Pugh D.J.R."/>
            <person name="Ab E."/>
            <person name="Faro A."/>
            <person name="Lutya P.T."/>
            <person name="Hoffmann E."/>
            <person name="Rees D.J.G."/>
        </authorList>
    </citation>
    <scope>STRUCTURE BY NMR OF 1-81</scope>
</reference>
<reference key="31">
    <citation type="submission" date="2008-04" db="PDB data bank">
        <title>Solution structure of the zinc finger CCHC domain and of the RING finger from the human retinoblastoma-binding protein 6 (retinoblastoma-binding Q protein 1, RBQ-1).</title>
        <authorList>
            <consortium name="RIKEN structural genomics initiative (RSGI)"/>
        </authorList>
    </citation>
    <scope>STRUCTURE BY NMR OF 159-309</scope>
</reference>
<reference evidence="18" key="32">
    <citation type="journal article" date="2012" name="J. Biol. Chem.">
        <title>Solution structure of RING finger-like domain of retinoblastoma-binding protein-6 (RBBP6) suggests it functions as a U-box.</title>
        <authorList>
            <person name="Kappo M.A."/>
            <person name="Ab E."/>
            <person name="Hassem F."/>
            <person name="Atkinson R.A."/>
            <person name="Faro A."/>
            <person name="Muleya V."/>
            <person name="Mulaudzi T."/>
            <person name="Poole J.O."/>
            <person name="McKenzie J.M."/>
            <person name="Chibi M."/>
            <person name="Moolman-Smook J.C."/>
            <person name="Rees D.J."/>
            <person name="Pugh D.J."/>
        </authorList>
    </citation>
    <scope>STRUCTURE BY NMR OF 249-335</scope>
    <scope>DOMAIN</scope>
</reference>
<reference evidence="19" key="33">
    <citation type="journal article" date="2018" name="Cell">
        <title>Protein Interaction Mapping Identifies RBBP6 as a Negative Regulator of Ebola Virus Replication.</title>
        <authorList>
            <person name="Batra J."/>
            <person name="Hultquist J.F."/>
            <person name="Liu D."/>
            <person name="Shtanko O."/>
            <person name="Von Dollen J."/>
            <person name="Satkamp L."/>
            <person name="Jang G.M."/>
            <person name="Luthra P."/>
            <person name="Schwarz T.M."/>
            <person name="Small G.I."/>
            <person name="Arnett E."/>
            <person name="Anantpadma M."/>
            <person name="Reyes A."/>
            <person name="Leung D.W."/>
            <person name="Kaake R."/>
            <person name="Haas P."/>
            <person name="Schmidt C.B."/>
            <person name="Schlesinger L.S."/>
            <person name="LaCount D.J."/>
            <person name="Davey R.A."/>
            <person name="Amarasinghe G.K."/>
            <person name="Basler C.F."/>
            <person name="Krogan N.J."/>
        </authorList>
    </citation>
    <scope>X-RAY CRYSTALLOGRAPHY (1.50 ANGSTROMS) OF 554-568</scope>
    <scope>INTERACTION WITH EBOLAVIRUS VP30 (MICROBIAL INFECTION)</scope>
    <scope>FUNCTION (MICROBIAL INFECTION)</scope>
</reference>